<sequence length="755" mass="86580">MKMSHLPFAWISDEAKCFLSRFFENISSLPVVDIRENPWILSQCIVKTGNSINNVKTLYNNLILWIYFHQTLCKKKPDYEEVWQEILKVQKILKDYLEQRQMITDYSSLTSFNKVGFETEFKNVAKDLLKLGSFLRWGTVTHAADYVNLTTEERAEIGENLQKAKNNMLSFTIYQIVDPWNENGYYVTNINRLLYLGNLLITLHGSWMNMEKLALNTINEKKNAILKAIENNKNFVSIYSYQILSLPLTSHRVTSFFKILTEDFDVITKSLELHALPVKSTWDDRVKFTPEPIQTFKVLTDLSKSSLSNQFESSSKKTSHGSSFNPEPFIKTEQRSNNTLSKDLFVGSEDGLLSSVKKDSMILDEPRNSTSINNSKKMHRILQTEILDLTDQTMHRPEDKVNQFNEIAVAPDGINQVIDTLSKLDLHNSNKVIDIVSSPKVNVVQLPKNKIDYHSTFFLPENEVNRQNGVQSRDQLSKNSTNDLQKILELRERIKTIKQNNEDIFKLPSEKRRKEIVHENLQSFDDEHNEMSLPPQDQKSIKQKNGNKANSSTKTLNMIGTNDVNASMKEKESASSAKKNQLVKDVKWTPSSSLLDLSRRNDLLQKELFESGLGEKVKKLLTDFTDTISLEERSLKDVLEPPKKTDVSNIATFNDNNLKNLLNSRKRDPLFQNFSFTEKMQPVRSPFFLPNAEIQDFDSGSLLTGKETQNTIFGASKAQENGDKDLIDLENSVQKDDDIVNKLVSHLTHSEEDVV</sequence>
<keyword id="KW-0597">Phosphoprotein</keyword>
<keyword id="KW-1185">Reference proteome</keyword>
<keyword id="KW-0946">Virion</keyword>
<keyword id="KW-0920">Virion tegument</keyword>
<organismHost>
    <name type="scientific">Homo sapiens</name>
    <name type="common">Human</name>
    <dbReference type="NCBI Taxonomy" id="9606"/>
</organismHost>
<reference key="1">
    <citation type="journal article" date="1996" name="J. Virol.">
        <title>Determination and analysis of the complete nucleotide sequence of human herpesvirus.</title>
        <authorList>
            <person name="Nicholas J."/>
        </authorList>
    </citation>
    <scope>NUCLEOTIDE SEQUENCE [LARGE SCALE GENOMIC DNA]</scope>
</reference>
<accession>P52519</accession>
<name>P100_HHV7J</name>
<gene>
    <name type="primary">U11</name>
</gene>
<feature type="chain" id="PRO_0000116301" description="Large structural phosphoprotein">
    <location>
        <begin position="1"/>
        <end position="755"/>
    </location>
</feature>
<feature type="region of interest" description="Disordered" evidence="2">
    <location>
        <begin position="312"/>
        <end position="333"/>
    </location>
</feature>
<feature type="region of interest" description="Disordered" evidence="2">
    <location>
        <begin position="522"/>
        <end position="555"/>
    </location>
</feature>
<feature type="compositionally biased region" description="Polar residues" evidence="2">
    <location>
        <begin position="535"/>
        <end position="555"/>
    </location>
</feature>
<evidence type="ECO:0000250" key="1"/>
<evidence type="ECO:0000256" key="2">
    <source>
        <dbReference type="SAM" id="MobiDB-lite"/>
    </source>
</evidence>
<evidence type="ECO:0000305" key="3"/>
<comment type="subcellular location">
    <subcellularLocation>
        <location evidence="3">Virion tegument</location>
    </subcellularLocation>
    <text evidence="1">Also found in dense bodies.</text>
</comment>
<comment type="PTM">
    <text evidence="1">Phosphorylated at multiple sites.</text>
</comment>
<comment type="similarity">
    <text evidence="3">Belongs to the herpesviridae large structural phosphoprotein family.</text>
</comment>
<protein>
    <recommendedName>
        <fullName>Large structural phosphoprotein</fullName>
    </recommendedName>
    <alternativeName>
        <fullName>100 kDa phosphoprotein</fullName>
        <shortName>pp100</shortName>
    </alternativeName>
</protein>
<organism>
    <name type="scientific">Human herpesvirus 7 (strain JI)</name>
    <name type="common">HHV-7</name>
    <name type="synonym">Human T lymphotropic virus</name>
    <dbReference type="NCBI Taxonomy" id="57278"/>
    <lineage>
        <taxon>Viruses</taxon>
        <taxon>Duplodnaviria</taxon>
        <taxon>Heunggongvirae</taxon>
        <taxon>Peploviricota</taxon>
        <taxon>Herviviricetes</taxon>
        <taxon>Herpesvirales</taxon>
        <taxon>Orthoherpesviridae</taxon>
        <taxon>Betaherpesvirinae</taxon>
        <taxon>Roseolovirus</taxon>
        <taxon>Roseolovirus humanbeta7</taxon>
        <taxon>Human betaherpesvirus 7</taxon>
    </lineage>
</organism>
<dbReference type="EMBL" id="U43400">
    <property type="protein sequence ID" value="AAC54672.1"/>
    <property type="molecule type" value="Genomic_DNA"/>
</dbReference>
<dbReference type="PIR" id="T41912">
    <property type="entry name" value="T41912"/>
</dbReference>
<dbReference type="SMR" id="P52519"/>
<dbReference type="Proteomes" id="UP000009246">
    <property type="component" value="Segment"/>
</dbReference>
<dbReference type="GO" id="GO:0019033">
    <property type="term" value="C:viral tegument"/>
    <property type="evidence" value="ECO:0007669"/>
    <property type="project" value="UniProtKB-SubCell"/>
</dbReference>
<dbReference type="GO" id="GO:0005198">
    <property type="term" value="F:structural molecule activity"/>
    <property type="evidence" value="ECO:0007669"/>
    <property type="project" value="InterPro"/>
</dbReference>
<dbReference type="InterPro" id="IPR010340">
    <property type="entry name" value="Herpes_UL11/UL32"/>
</dbReference>
<dbReference type="Pfam" id="PF06070">
    <property type="entry name" value="Herpes_UL32"/>
    <property type="match status" value="1"/>
</dbReference>
<proteinExistence type="inferred from homology"/>